<evidence type="ECO:0000255" key="1">
    <source>
        <dbReference type="HAMAP-Rule" id="MF_00406"/>
    </source>
</evidence>
<dbReference type="EC" id="4.2.1.59" evidence="1"/>
<dbReference type="EMBL" id="AE017194">
    <property type="protein sequence ID" value="AAS44301.1"/>
    <property type="molecule type" value="Genomic_DNA"/>
</dbReference>
<dbReference type="SMR" id="P61451"/>
<dbReference type="KEGG" id="bca:BCE_5401"/>
<dbReference type="HOGENOM" id="CLU_078912_3_0_9"/>
<dbReference type="Proteomes" id="UP000002527">
    <property type="component" value="Chromosome"/>
</dbReference>
<dbReference type="GO" id="GO:0005737">
    <property type="term" value="C:cytoplasm"/>
    <property type="evidence" value="ECO:0007669"/>
    <property type="project" value="UniProtKB-SubCell"/>
</dbReference>
<dbReference type="GO" id="GO:0016020">
    <property type="term" value="C:membrane"/>
    <property type="evidence" value="ECO:0007669"/>
    <property type="project" value="GOC"/>
</dbReference>
<dbReference type="GO" id="GO:0019171">
    <property type="term" value="F:(3R)-hydroxyacyl-[acyl-carrier-protein] dehydratase activity"/>
    <property type="evidence" value="ECO:0007669"/>
    <property type="project" value="UniProtKB-EC"/>
</dbReference>
<dbReference type="GO" id="GO:0006633">
    <property type="term" value="P:fatty acid biosynthetic process"/>
    <property type="evidence" value="ECO:0007669"/>
    <property type="project" value="UniProtKB-UniRule"/>
</dbReference>
<dbReference type="GO" id="GO:0009245">
    <property type="term" value="P:lipid A biosynthetic process"/>
    <property type="evidence" value="ECO:0007669"/>
    <property type="project" value="UniProtKB-UniRule"/>
</dbReference>
<dbReference type="CDD" id="cd01288">
    <property type="entry name" value="FabZ"/>
    <property type="match status" value="1"/>
</dbReference>
<dbReference type="FunFam" id="3.10.129.10:FF:000001">
    <property type="entry name" value="3-hydroxyacyl-[acyl-carrier-protein] dehydratase FabZ"/>
    <property type="match status" value="1"/>
</dbReference>
<dbReference type="Gene3D" id="3.10.129.10">
    <property type="entry name" value="Hotdog Thioesterase"/>
    <property type="match status" value="1"/>
</dbReference>
<dbReference type="HAMAP" id="MF_00406">
    <property type="entry name" value="FabZ"/>
    <property type="match status" value="1"/>
</dbReference>
<dbReference type="InterPro" id="IPR013114">
    <property type="entry name" value="FabA_FabZ"/>
</dbReference>
<dbReference type="InterPro" id="IPR010084">
    <property type="entry name" value="FabZ"/>
</dbReference>
<dbReference type="InterPro" id="IPR029069">
    <property type="entry name" value="HotDog_dom_sf"/>
</dbReference>
<dbReference type="NCBIfam" id="TIGR01750">
    <property type="entry name" value="fabZ"/>
    <property type="match status" value="1"/>
</dbReference>
<dbReference type="NCBIfam" id="NF000582">
    <property type="entry name" value="PRK00006.1"/>
    <property type="match status" value="1"/>
</dbReference>
<dbReference type="PANTHER" id="PTHR30272">
    <property type="entry name" value="3-HYDROXYACYL-[ACYL-CARRIER-PROTEIN] DEHYDRATASE"/>
    <property type="match status" value="1"/>
</dbReference>
<dbReference type="PANTHER" id="PTHR30272:SF1">
    <property type="entry name" value="3-HYDROXYACYL-[ACYL-CARRIER-PROTEIN] DEHYDRATASE"/>
    <property type="match status" value="1"/>
</dbReference>
<dbReference type="Pfam" id="PF07977">
    <property type="entry name" value="FabA"/>
    <property type="match status" value="1"/>
</dbReference>
<dbReference type="SUPFAM" id="SSF54637">
    <property type="entry name" value="Thioesterase/thiol ester dehydrase-isomerase"/>
    <property type="match status" value="1"/>
</dbReference>
<organism>
    <name type="scientific">Bacillus cereus (strain ATCC 10987 / NRS 248)</name>
    <dbReference type="NCBI Taxonomy" id="222523"/>
    <lineage>
        <taxon>Bacteria</taxon>
        <taxon>Bacillati</taxon>
        <taxon>Bacillota</taxon>
        <taxon>Bacilli</taxon>
        <taxon>Bacillales</taxon>
        <taxon>Bacillaceae</taxon>
        <taxon>Bacillus</taxon>
        <taxon>Bacillus cereus group</taxon>
    </lineage>
</organism>
<proteinExistence type="inferred from homology"/>
<protein>
    <recommendedName>
        <fullName evidence="1">3-hydroxyacyl-[acyl-carrier-protein] dehydratase FabZ</fullName>
        <ecNumber evidence="1">4.2.1.59</ecNumber>
    </recommendedName>
    <alternativeName>
        <fullName evidence="1">(3R)-hydroxymyristoyl-[acyl-carrier-protein] dehydratase</fullName>
        <shortName evidence="1">(3R)-hydroxymyristoyl-ACP dehydrase</shortName>
    </alternativeName>
    <alternativeName>
        <fullName evidence="1">Beta-hydroxyacyl-ACP dehydratase</fullName>
    </alternativeName>
</protein>
<reference key="1">
    <citation type="journal article" date="2004" name="Nucleic Acids Res.">
        <title>The genome sequence of Bacillus cereus ATCC 10987 reveals metabolic adaptations and a large plasmid related to Bacillus anthracis pXO1.</title>
        <authorList>
            <person name="Rasko D.A."/>
            <person name="Ravel J."/>
            <person name="Oekstad O.A."/>
            <person name="Helgason E."/>
            <person name="Cer R.Z."/>
            <person name="Jiang L."/>
            <person name="Shores K.A."/>
            <person name="Fouts D.E."/>
            <person name="Tourasse N.J."/>
            <person name="Angiuoli S.V."/>
            <person name="Kolonay J.F."/>
            <person name="Nelson W.C."/>
            <person name="Kolstoe A.-B."/>
            <person name="Fraser C.M."/>
            <person name="Read T.D."/>
        </authorList>
    </citation>
    <scope>NUCLEOTIDE SEQUENCE [LARGE SCALE GENOMIC DNA]</scope>
    <source>
        <strain>ATCC 10987 / NRS 248</strain>
    </source>
</reference>
<name>FABZ_BACC1</name>
<keyword id="KW-0963">Cytoplasm</keyword>
<keyword id="KW-0441">Lipid A biosynthesis</keyword>
<keyword id="KW-0444">Lipid biosynthesis</keyword>
<keyword id="KW-0443">Lipid metabolism</keyword>
<keyword id="KW-0456">Lyase</keyword>
<feature type="chain" id="PRO_0000091635" description="3-hydroxyacyl-[acyl-carrier-protein] dehydratase FabZ">
    <location>
        <begin position="1"/>
        <end position="144"/>
    </location>
</feature>
<feature type="active site" evidence="1">
    <location>
        <position position="48"/>
    </location>
</feature>
<gene>
    <name evidence="1" type="primary">fabZ</name>
    <name type="ordered locus">BCE_5401</name>
</gene>
<sequence length="144" mass="15966">MLNIEQIKEIIPHRYPFLLVDKILEVDEGKRAVGIKNVSANEEFFNGHFPDYAVMPGVLIVEALAQVGAVAVLKKEENRGRLAFFAGIDNCRFKKQVRPGDQLRLEVEMTRVRGPIGKGKAIATVDGEVACEAEITFAIGDKKE</sequence>
<comment type="function">
    <text evidence="1">Involved in unsaturated fatty acids biosynthesis. Catalyzes the dehydration of short chain beta-hydroxyacyl-ACPs and long chain saturated and unsaturated beta-hydroxyacyl-ACPs.</text>
</comment>
<comment type="catalytic activity">
    <reaction evidence="1">
        <text>a (3R)-hydroxyacyl-[ACP] = a (2E)-enoyl-[ACP] + H2O</text>
        <dbReference type="Rhea" id="RHEA:13097"/>
        <dbReference type="Rhea" id="RHEA-COMP:9925"/>
        <dbReference type="Rhea" id="RHEA-COMP:9945"/>
        <dbReference type="ChEBI" id="CHEBI:15377"/>
        <dbReference type="ChEBI" id="CHEBI:78784"/>
        <dbReference type="ChEBI" id="CHEBI:78827"/>
        <dbReference type="EC" id="4.2.1.59"/>
    </reaction>
</comment>
<comment type="subcellular location">
    <subcellularLocation>
        <location evidence="1">Cytoplasm</location>
    </subcellularLocation>
</comment>
<comment type="similarity">
    <text evidence="1">Belongs to the thioester dehydratase family. FabZ subfamily.</text>
</comment>
<accession>P61451</accession>